<proteinExistence type="evidence at transcript level"/>
<comment type="similarity">
    <text evidence="1">Belongs to the universal ribosomal protein uS19 family.</text>
</comment>
<feature type="chain" id="PRO_0000130047" description="Small ribosomal subunit protein uS19">
    <location>
        <begin position="1"/>
        <end position="151"/>
    </location>
</feature>
<sequence>MADADVDVGPVQPKKRTFKKFSYRGVDLDALLDMTSEELVKLFHARARRRFQRGLKRQPMALIKKLRKAKREAPSGEKPEPVRTHLRNMIIVPEMIGSIIGVYNGKTFNQVEIKPEMIGHYLAEFSISYKPVKHGRPGIGATHSSRFIPLK</sequence>
<accession>O65059</accession>
<keyword id="KW-0687">Ribonucleoprotein</keyword>
<keyword id="KW-0689">Ribosomal protein</keyword>
<reference key="1">
    <citation type="journal article" date="1998" name="Genetics">
        <title>Sequence-tagged-site (STS) markers of arbitrary genes: development, characterization and analysis of linkage in black spruce.</title>
        <authorList>
            <person name="Perry D.J."/>
            <person name="Bousquet J."/>
        </authorList>
    </citation>
    <scope>NUCLEOTIDE SEQUENCE [MRNA]</scope>
</reference>
<protein>
    <recommendedName>
        <fullName evidence="1">Small ribosomal subunit protein uS19</fullName>
    </recommendedName>
    <alternativeName>
        <fullName>40S ribosomal protein S15</fullName>
    </alternativeName>
</protein>
<gene>
    <name type="primary">RPS15</name>
    <name type="synonym">SB23</name>
</gene>
<evidence type="ECO:0000305" key="1"/>
<name>RS15_PICMA</name>
<organism>
    <name type="scientific">Picea mariana</name>
    <name type="common">Black spruce</name>
    <name type="synonym">Abies mariana</name>
    <dbReference type="NCBI Taxonomy" id="3335"/>
    <lineage>
        <taxon>Eukaryota</taxon>
        <taxon>Viridiplantae</taxon>
        <taxon>Streptophyta</taxon>
        <taxon>Embryophyta</taxon>
        <taxon>Tracheophyta</taxon>
        <taxon>Spermatophyta</taxon>
        <taxon>Pinopsida</taxon>
        <taxon>Pinidae</taxon>
        <taxon>Conifers I</taxon>
        <taxon>Pinales</taxon>
        <taxon>Pinaceae</taxon>
        <taxon>Picea</taxon>
    </lineage>
</organism>
<dbReference type="EMBL" id="AF051217">
    <property type="protein sequence ID" value="AAC32121.1"/>
    <property type="molecule type" value="mRNA"/>
</dbReference>
<dbReference type="PIR" id="T51960">
    <property type="entry name" value="T51960"/>
</dbReference>
<dbReference type="SMR" id="O65059"/>
<dbReference type="GO" id="GO:0022627">
    <property type="term" value="C:cytosolic small ribosomal subunit"/>
    <property type="evidence" value="ECO:0007669"/>
    <property type="project" value="TreeGrafter"/>
</dbReference>
<dbReference type="GO" id="GO:0003723">
    <property type="term" value="F:RNA binding"/>
    <property type="evidence" value="ECO:0007669"/>
    <property type="project" value="InterPro"/>
</dbReference>
<dbReference type="GO" id="GO:0003735">
    <property type="term" value="F:structural constituent of ribosome"/>
    <property type="evidence" value="ECO:0007669"/>
    <property type="project" value="InterPro"/>
</dbReference>
<dbReference type="GO" id="GO:0000028">
    <property type="term" value="P:ribosomal small subunit assembly"/>
    <property type="evidence" value="ECO:0007669"/>
    <property type="project" value="TreeGrafter"/>
</dbReference>
<dbReference type="GO" id="GO:0006412">
    <property type="term" value="P:translation"/>
    <property type="evidence" value="ECO:0007669"/>
    <property type="project" value="InterPro"/>
</dbReference>
<dbReference type="FunFam" id="3.30.860.10:FF:000002">
    <property type="entry name" value="40S ribosomal protein S15"/>
    <property type="match status" value="1"/>
</dbReference>
<dbReference type="Gene3D" id="3.30.860.10">
    <property type="entry name" value="30s Ribosomal Protein S19, Chain A"/>
    <property type="match status" value="1"/>
</dbReference>
<dbReference type="HAMAP" id="MF_00531">
    <property type="entry name" value="Ribosomal_uS19"/>
    <property type="match status" value="1"/>
</dbReference>
<dbReference type="InterPro" id="IPR002222">
    <property type="entry name" value="Ribosomal_uS19"/>
</dbReference>
<dbReference type="InterPro" id="IPR020934">
    <property type="entry name" value="Ribosomal_uS19_CS"/>
</dbReference>
<dbReference type="InterPro" id="IPR005713">
    <property type="entry name" value="Ribosomal_uS19_euk/arc"/>
</dbReference>
<dbReference type="InterPro" id="IPR023575">
    <property type="entry name" value="Ribosomal_uS19_SF"/>
</dbReference>
<dbReference type="NCBIfam" id="NF003121">
    <property type="entry name" value="PRK04038.1"/>
    <property type="match status" value="1"/>
</dbReference>
<dbReference type="NCBIfam" id="TIGR01025">
    <property type="entry name" value="uS19_arch"/>
    <property type="match status" value="1"/>
</dbReference>
<dbReference type="PANTHER" id="PTHR11880">
    <property type="entry name" value="RIBOSOMAL PROTEIN S19P FAMILY MEMBER"/>
    <property type="match status" value="1"/>
</dbReference>
<dbReference type="PANTHER" id="PTHR11880:SF53">
    <property type="entry name" value="SMALL RIBOSOMAL SUBUNIT PROTEIN US19U-RELATED"/>
    <property type="match status" value="1"/>
</dbReference>
<dbReference type="Pfam" id="PF00203">
    <property type="entry name" value="Ribosomal_S19"/>
    <property type="match status" value="1"/>
</dbReference>
<dbReference type="PIRSF" id="PIRSF002144">
    <property type="entry name" value="Ribosomal_S19"/>
    <property type="match status" value="1"/>
</dbReference>
<dbReference type="PRINTS" id="PR00975">
    <property type="entry name" value="RIBOSOMALS19"/>
</dbReference>
<dbReference type="SUPFAM" id="SSF54570">
    <property type="entry name" value="Ribosomal protein S19"/>
    <property type="match status" value="1"/>
</dbReference>
<dbReference type="PROSITE" id="PS00323">
    <property type="entry name" value="RIBOSOMAL_S19"/>
    <property type="match status" value="1"/>
</dbReference>